<reference key="1">
    <citation type="journal article" date="2005" name="Science">
        <title>The genome of the basidiomycetous yeast and human pathogen Cryptococcus neoformans.</title>
        <authorList>
            <person name="Loftus B.J."/>
            <person name="Fung E."/>
            <person name="Roncaglia P."/>
            <person name="Rowley D."/>
            <person name="Amedeo P."/>
            <person name="Bruno D."/>
            <person name="Vamathevan J."/>
            <person name="Miranda M."/>
            <person name="Anderson I.J."/>
            <person name="Fraser J.A."/>
            <person name="Allen J.E."/>
            <person name="Bosdet I.E."/>
            <person name="Brent M.R."/>
            <person name="Chiu R."/>
            <person name="Doering T.L."/>
            <person name="Donlin M.J."/>
            <person name="D'Souza C.A."/>
            <person name="Fox D.S."/>
            <person name="Grinberg V."/>
            <person name="Fu J."/>
            <person name="Fukushima M."/>
            <person name="Haas B.J."/>
            <person name="Huang J.C."/>
            <person name="Janbon G."/>
            <person name="Jones S.J.M."/>
            <person name="Koo H.L."/>
            <person name="Krzywinski M.I."/>
            <person name="Kwon-Chung K.J."/>
            <person name="Lengeler K.B."/>
            <person name="Maiti R."/>
            <person name="Marra M.A."/>
            <person name="Marra R.E."/>
            <person name="Mathewson C.A."/>
            <person name="Mitchell T.G."/>
            <person name="Pertea M."/>
            <person name="Riggs F.R."/>
            <person name="Salzberg S.L."/>
            <person name="Schein J.E."/>
            <person name="Shvartsbeyn A."/>
            <person name="Shin H."/>
            <person name="Shumway M."/>
            <person name="Specht C.A."/>
            <person name="Suh B.B."/>
            <person name="Tenney A."/>
            <person name="Utterback T.R."/>
            <person name="Wickes B.L."/>
            <person name="Wortman J.R."/>
            <person name="Wye N.H."/>
            <person name="Kronstad J.W."/>
            <person name="Lodge J.K."/>
            <person name="Heitman J."/>
            <person name="Davis R.W."/>
            <person name="Fraser C.M."/>
            <person name="Hyman R.W."/>
        </authorList>
    </citation>
    <scope>NUCLEOTIDE SEQUENCE [LARGE SCALE GENOMIC DNA]</scope>
    <source>
        <strain>JEC21 / ATCC MYA-565</strain>
    </source>
</reference>
<sequence length="130" mass="14887">MPPFATRPLNSTKSHPIFAQIRRHPFILFGIPFIGIIVGSSFALQAFTQTRYDYQETKVKSVGKEEELGMKSGRRKIDLKEEYYFSMASVSQDDYEPVRVPRPVGVPEWGGGRSGEEAPMKGYRKEDRWV</sequence>
<accession>P0CM84</accession>
<accession>Q55NR3</accession>
<accession>Q5KC48</accession>
<protein>
    <recommendedName>
        <fullName>Cytochrome c oxidase assembly protein COX16, mitochondrial</fullName>
    </recommendedName>
</protein>
<name>COX16_CRYNJ</name>
<comment type="function">
    <text evidence="1">Required for the assembly of the mitochondrial respiratory chain complex IV (CIV), also known as cytochrome c oxidase. May participate in merging the COX1 and COX2 assembly lines.</text>
</comment>
<comment type="subcellular location">
    <subcellularLocation>
        <location evidence="1">Mitochondrion inner membrane</location>
        <topology evidence="1">Single-pass membrane protein</topology>
    </subcellularLocation>
</comment>
<comment type="similarity">
    <text evidence="4">Belongs to the COX16 family.</text>
</comment>
<comment type="sequence caution" evidence="4">
    <conflict type="erroneous gene model prediction">
        <sequence resource="EMBL-CDS" id="AAW45421"/>
    </conflict>
</comment>
<evidence type="ECO:0000250" key="1">
    <source>
        <dbReference type="UniProtKB" id="P47081"/>
    </source>
</evidence>
<evidence type="ECO:0000255" key="2"/>
<evidence type="ECO:0000256" key="3">
    <source>
        <dbReference type="SAM" id="MobiDB-lite"/>
    </source>
</evidence>
<evidence type="ECO:0000305" key="4"/>
<keyword id="KW-0472">Membrane</keyword>
<keyword id="KW-0496">Mitochondrion</keyword>
<keyword id="KW-0999">Mitochondrion inner membrane</keyword>
<keyword id="KW-1185">Reference proteome</keyword>
<keyword id="KW-0809">Transit peptide</keyword>
<keyword id="KW-0812">Transmembrane</keyword>
<keyword id="KW-1133">Transmembrane helix</keyword>
<dbReference type="EMBL" id="AE017349">
    <property type="protein sequence ID" value="AAW45421.1"/>
    <property type="status" value="ALT_SEQ"/>
    <property type="molecule type" value="Genomic_DNA"/>
</dbReference>
<dbReference type="RefSeq" id="XP_572728.1">
    <property type="nucleotide sequence ID" value="XM_572728.1"/>
</dbReference>
<dbReference type="FunCoup" id="P0CM84">
    <property type="interactions" value="18"/>
</dbReference>
<dbReference type="STRING" id="214684.P0CM84"/>
<dbReference type="PaxDb" id="214684-P0CM84"/>
<dbReference type="GeneID" id="3259696"/>
<dbReference type="KEGG" id="cne:CNI00260"/>
<dbReference type="InParanoid" id="P0CM84"/>
<dbReference type="OrthoDB" id="5516033at2759"/>
<dbReference type="Proteomes" id="UP000002149">
    <property type="component" value="Chromosome 9"/>
</dbReference>
<dbReference type="GO" id="GO:0005743">
    <property type="term" value="C:mitochondrial inner membrane"/>
    <property type="evidence" value="ECO:0000318"/>
    <property type="project" value="GO_Central"/>
</dbReference>
<dbReference type="GO" id="GO:0033617">
    <property type="term" value="P:mitochondrial cytochrome c oxidase assembly"/>
    <property type="evidence" value="ECO:0000318"/>
    <property type="project" value="GO_Central"/>
</dbReference>
<dbReference type="InterPro" id="IPR020164">
    <property type="entry name" value="Cyt_c_Oxase_assmbl_COX16"/>
</dbReference>
<dbReference type="PANTHER" id="PTHR17130:SF14">
    <property type="entry name" value="CYTOCHROME C OXIDASE ASSEMBLY PROTEIN COX16 HOMOLOG, MITOCHONDRIAL"/>
    <property type="match status" value="1"/>
</dbReference>
<dbReference type="PANTHER" id="PTHR17130">
    <property type="entry name" value="MITOCHONDRIAL OUTER MEMBRANE PROTEIN 25"/>
    <property type="match status" value="1"/>
</dbReference>
<dbReference type="Pfam" id="PF14138">
    <property type="entry name" value="COX16"/>
    <property type="match status" value="1"/>
</dbReference>
<gene>
    <name type="primary">COX16</name>
    <name type="ordered locus">CNI00260</name>
</gene>
<organism>
    <name type="scientific">Cryptococcus neoformans var. neoformans serotype D (strain JEC21 / ATCC MYA-565)</name>
    <name type="common">Filobasidiella neoformans</name>
    <dbReference type="NCBI Taxonomy" id="214684"/>
    <lineage>
        <taxon>Eukaryota</taxon>
        <taxon>Fungi</taxon>
        <taxon>Dikarya</taxon>
        <taxon>Basidiomycota</taxon>
        <taxon>Agaricomycotina</taxon>
        <taxon>Tremellomycetes</taxon>
        <taxon>Tremellales</taxon>
        <taxon>Cryptococcaceae</taxon>
        <taxon>Cryptococcus</taxon>
        <taxon>Cryptococcus neoformans species complex</taxon>
    </lineage>
</organism>
<feature type="transit peptide" description="Mitochondrion" evidence="2">
    <location>
        <begin position="1"/>
        <end position="23"/>
    </location>
</feature>
<feature type="chain" id="PRO_0000280645" description="Cytochrome c oxidase assembly protein COX16, mitochondrial">
    <location>
        <begin position="24"/>
        <end position="130"/>
    </location>
</feature>
<feature type="transmembrane region" description="Helical" evidence="2">
    <location>
        <begin position="26"/>
        <end position="46"/>
    </location>
</feature>
<feature type="region of interest" description="Disordered" evidence="3">
    <location>
        <begin position="106"/>
        <end position="130"/>
    </location>
</feature>
<feature type="compositionally biased region" description="Basic and acidic residues" evidence="3">
    <location>
        <begin position="114"/>
        <end position="130"/>
    </location>
</feature>
<proteinExistence type="inferred from homology"/>